<evidence type="ECO:0000255" key="1">
    <source>
        <dbReference type="HAMAP-Rule" id="MF_00418"/>
    </source>
</evidence>
<evidence type="ECO:0000305" key="2"/>
<proteinExistence type="inferred from homology"/>
<organism>
    <name type="scientific">Wolbachia pipientis wMel</name>
    <dbReference type="NCBI Taxonomy" id="163164"/>
    <lineage>
        <taxon>Bacteria</taxon>
        <taxon>Pseudomonadati</taxon>
        <taxon>Pseudomonadota</taxon>
        <taxon>Alphaproteobacteria</taxon>
        <taxon>Rickettsiales</taxon>
        <taxon>Anaplasmataceae</taxon>
        <taxon>Wolbachieae</taxon>
        <taxon>Wolbachia</taxon>
    </lineage>
</organism>
<keyword id="KW-0028">Amino-acid biosynthesis</keyword>
<keyword id="KW-0963">Cytoplasm</keyword>
<keyword id="KW-0220">Diaminopimelate biosynthesis</keyword>
<keyword id="KW-0456">Lyase</keyword>
<keyword id="KW-0457">Lysine biosynthesis</keyword>
<keyword id="KW-0704">Schiff base</keyword>
<feature type="chain" id="PRO_0000103184" description="4-hydroxy-tetrahydrodipicolinate synthase">
    <location>
        <begin position="1"/>
        <end position="293"/>
    </location>
</feature>
<feature type="active site" description="Proton donor/acceptor" evidence="1">
    <location>
        <position position="133"/>
    </location>
</feature>
<feature type="active site" description="Schiff-base intermediate with substrate" evidence="1">
    <location>
        <position position="161"/>
    </location>
</feature>
<feature type="binding site" evidence="1">
    <location>
        <position position="46"/>
    </location>
    <ligand>
        <name>pyruvate</name>
        <dbReference type="ChEBI" id="CHEBI:15361"/>
    </ligand>
</feature>
<feature type="binding site" evidence="1">
    <location>
        <position position="202"/>
    </location>
    <ligand>
        <name>pyruvate</name>
        <dbReference type="ChEBI" id="CHEBI:15361"/>
    </ligand>
</feature>
<feature type="site" description="Part of a proton relay during catalysis" evidence="1">
    <location>
        <position position="45"/>
    </location>
</feature>
<feature type="site" description="Part of a proton relay during catalysis" evidence="1">
    <location>
        <position position="107"/>
    </location>
</feature>
<sequence>MKSTFLWTACVTPFNCNGDSIDYSSLQRLLTMQVKAENGVVLLGSTGESLSLTDSEKRTLVEFVCKLKLNTEIIIGVPGVNLYQTLEWLDFCKGMPIHGYLMTTPIYAKPGIMGQTLWFEKLLEKAHVPVMFYNIPSRAGINLHAETVRNLSSHEKFWAIKDSSGTVDTLAQYKKVAPNIEVFCGDDNMISDMAAYGAAGLVSVASNVWPYVAHEYVKKCLNGRNPQADIWQQACEALFIASNPIPTKALLHDIGLIEHQTVRLPLSTEDLPSVEKLRQVNKMILGWKELATL</sequence>
<comment type="function">
    <text evidence="1">Catalyzes the condensation of (S)-aspartate-beta-semialdehyde [(S)-ASA] and pyruvate to 4-hydroxy-tetrahydrodipicolinate (HTPA).</text>
</comment>
<comment type="catalytic activity">
    <reaction evidence="1">
        <text>L-aspartate 4-semialdehyde + pyruvate = (2S,4S)-4-hydroxy-2,3,4,5-tetrahydrodipicolinate + H2O + H(+)</text>
        <dbReference type="Rhea" id="RHEA:34171"/>
        <dbReference type="ChEBI" id="CHEBI:15361"/>
        <dbReference type="ChEBI" id="CHEBI:15377"/>
        <dbReference type="ChEBI" id="CHEBI:15378"/>
        <dbReference type="ChEBI" id="CHEBI:67139"/>
        <dbReference type="ChEBI" id="CHEBI:537519"/>
        <dbReference type="EC" id="4.3.3.7"/>
    </reaction>
</comment>
<comment type="pathway">
    <text evidence="1">Amino-acid biosynthesis; L-lysine biosynthesis via DAP pathway; (S)-tetrahydrodipicolinate from L-aspartate: step 3/4.</text>
</comment>
<comment type="subunit">
    <text evidence="1">Homotetramer; dimer of dimers.</text>
</comment>
<comment type="subcellular location">
    <subcellularLocation>
        <location evidence="1">Cytoplasm</location>
    </subcellularLocation>
</comment>
<comment type="similarity">
    <text evidence="1">Belongs to the DapA family.</text>
</comment>
<comment type="caution">
    <text evidence="2">Was originally thought to be a dihydrodipicolinate synthase (DHDPS), catalyzing the condensation of (S)-aspartate-beta-semialdehyde [(S)-ASA] and pyruvate to dihydrodipicolinate (DHDP). However, it was shown in E.coli that the product of the enzymatic reaction is not dihydrodipicolinate but in fact (4S)-4-hydroxy-2,3,4,5-tetrahydro-(2S)-dipicolinic acid (HTPA), and that the consecutive dehydration reaction leading to DHDP is not spontaneous but catalyzed by DapB.</text>
</comment>
<reference key="1">
    <citation type="journal article" date="2004" name="PLoS Biol.">
        <title>Phylogenomics of the reproductive parasite Wolbachia pipientis wMel: a streamlined genome overrun by mobile genetic elements.</title>
        <authorList>
            <person name="Wu M."/>
            <person name="Sun L.V."/>
            <person name="Vamathevan J.J."/>
            <person name="Riegler M."/>
            <person name="DeBoy R.T."/>
            <person name="Brownlie J.C."/>
            <person name="McGraw E.A."/>
            <person name="Martin W."/>
            <person name="Esser C."/>
            <person name="Ahmadinejad N."/>
            <person name="Wiegand C."/>
            <person name="Madupu R."/>
            <person name="Beanan M.J."/>
            <person name="Brinkac L.M."/>
            <person name="Daugherty S.C."/>
            <person name="Durkin A.S."/>
            <person name="Kolonay J.F."/>
            <person name="Nelson W.C."/>
            <person name="Mohamoud Y."/>
            <person name="Lee P."/>
            <person name="Berry K.J."/>
            <person name="Young M.B."/>
            <person name="Utterback T.R."/>
            <person name="Weidman J.F."/>
            <person name="Nierman W.C."/>
            <person name="Paulsen I.T."/>
            <person name="Nelson K.E."/>
            <person name="Tettelin H."/>
            <person name="O'Neill S.L."/>
            <person name="Eisen J.A."/>
        </authorList>
    </citation>
    <scope>NUCLEOTIDE SEQUENCE [LARGE SCALE GENOMIC DNA]</scope>
</reference>
<protein>
    <recommendedName>
        <fullName evidence="1">4-hydroxy-tetrahydrodipicolinate synthase</fullName>
        <shortName evidence="1">HTPA synthase</shortName>
        <ecNumber evidence="1">4.3.3.7</ecNumber>
    </recommendedName>
</protein>
<dbReference type="EC" id="4.3.3.7" evidence="1"/>
<dbReference type="EMBL" id="AE017196">
    <property type="protein sequence ID" value="AAS14464.1"/>
    <property type="molecule type" value="Genomic_DNA"/>
</dbReference>
<dbReference type="RefSeq" id="WP_010962826.1">
    <property type="nucleotide sequence ID" value="NZ_OX384529.1"/>
</dbReference>
<dbReference type="SMR" id="Q73H02"/>
<dbReference type="EnsemblBacteria" id="AAS14464">
    <property type="protein sequence ID" value="AAS14464"/>
    <property type="gene ID" value="WD_0775"/>
</dbReference>
<dbReference type="GeneID" id="70036256"/>
<dbReference type="KEGG" id="wol:WD_0775"/>
<dbReference type="eggNOG" id="COG0329">
    <property type="taxonomic scope" value="Bacteria"/>
</dbReference>
<dbReference type="UniPathway" id="UPA00034">
    <property type="reaction ID" value="UER00017"/>
</dbReference>
<dbReference type="Proteomes" id="UP000008215">
    <property type="component" value="Chromosome"/>
</dbReference>
<dbReference type="GO" id="GO:0005829">
    <property type="term" value="C:cytosol"/>
    <property type="evidence" value="ECO:0007669"/>
    <property type="project" value="TreeGrafter"/>
</dbReference>
<dbReference type="GO" id="GO:0008840">
    <property type="term" value="F:4-hydroxy-tetrahydrodipicolinate synthase activity"/>
    <property type="evidence" value="ECO:0007669"/>
    <property type="project" value="UniProtKB-UniRule"/>
</dbReference>
<dbReference type="GO" id="GO:0019877">
    <property type="term" value="P:diaminopimelate biosynthetic process"/>
    <property type="evidence" value="ECO:0007669"/>
    <property type="project" value="UniProtKB-UniRule"/>
</dbReference>
<dbReference type="GO" id="GO:0009089">
    <property type="term" value="P:lysine biosynthetic process via diaminopimelate"/>
    <property type="evidence" value="ECO:0007669"/>
    <property type="project" value="UniProtKB-UniRule"/>
</dbReference>
<dbReference type="CDD" id="cd00950">
    <property type="entry name" value="DHDPS"/>
    <property type="match status" value="1"/>
</dbReference>
<dbReference type="Gene3D" id="3.20.20.70">
    <property type="entry name" value="Aldolase class I"/>
    <property type="match status" value="1"/>
</dbReference>
<dbReference type="HAMAP" id="MF_00418">
    <property type="entry name" value="DapA"/>
    <property type="match status" value="1"/>
</dbReference>
<dbReference type="InterPro" id="IPR013785">
    <property type="entry name" value="Aldolase_TIM"/>
</dbReference>
<dbReference type="InterPro" id="IPR005263">
    <property type="entry name" value="DapA"/>
</dbReference>
<dbReference type="InterPro" id="IPR002220">
    <property type="entry name" value="DapA-like"/>
</dbReference>
<dbReference type="InterPro" id="IPR020625">
    <property type="entry name" value="Schiff_base-form_aldolases_AS"/>
</dbReference>
<dbReference type="InterPro" id="IPR020624">
    <property type="entry name" value="Schiff_base-form_aldolases_CS"/>
</dbReference>
<dbReference type="NCBIfam" id="TIGR00674">
    <property type="entry name" value="dapA"/>
    <property type="match status" value="1"/>
</dbReference>
<dbReference type="PANTHER" id="PTHR12128:SF66">
    <property type="entry name" value="4-HYDROXY-2-OXOGLUTARATE ALDOLASE, MITOCHONDRIAL"/>
    <property type="match status" value="1"/>
</dbReference>
<dbReference type="PANTHER" id="PTHR12128">
    <property type="entry name" value="DIHYDRODIPICOLINATE SYNTHASE"/>
    <property type="match status" value="1"/>
</dbReference>
<dbReference type="Pfam" id="PF00701">
    <property type="entry name" value="DHDPS"/>
    <property type="match status" value="1"/>
</dbReference>
<dbReference type="PIRSF" id="PIRSF001365">
    <property type="entry name" value="DHDPS"/>
    <property type="match status" value="1"/>
</dbReference>
<dbReference type="PRINTS" id="PR00146">
    <property type="entry name" value="DHPICSNTHASE"/>
</dbReference>
<dbReference type="SMART" id="SM01130">
    <property type="entry name" value="DHDPS"/>
    <property type="match status" value="1"/>
</dbReference>
<dbReference type="SUPFAM" id="SSF51569">
    <property type="entry name" value="Aldolase"/>
    <property type="match status" value="1"/>
</dbReference>
<dbReference type="PROSITE" id="PS00665">
    <property type="entry name" value="DHDPS_1"/>
    <property type="match status" value="1"/>
</dbReference>
<dbReference type="PROSITE" id="PS00666">
    <property type="entry name" value="DHDPS_2"/>
    <property type="match status" value="1"/>
</dbReference>
<name>DAPA_WOLPM</name>
<gene>
    <name evidence="1" type="primary">dapA</name>
    <name type="ordered locus">WD_0775</name>
</gene>
<accession>Q73H02</accession>